<accession>A9JSM3</accession>
<sequence length="176" mass="18226">MAAASPVCGSQASAVGASSPPAPAPAPAAGLGRCRMALLLAVALDVAGMAALLTGVFAQLQVRGRDFGDLLIYSGALLVFLSLLGWILWYTGNIEISRQELERDYGLRPSAIARLARKLSRRWSAPATASPRTTAGLRSARRANRAPQPSSSGSRRVRLQLATLEAGSVAAGTGSE</sequence>
<dbReference type="EMBL" id="AC162034">
    <property type="status" value="NOT_ANNOTATED_CDS"/>
    <property type="molecule type" value="Genomic_DNA"/>
</dbReference>
<dbReference type="EMBL" id="BC132101">
    <property type="protein sequence ID" value="AAI32102.1"/>
    <property type="molecule type" value="mRNA"/>
</dbReference>
<dbReference type="EMBL" id="BC144965">
    <property type="protein sequence ID" value="AAI44966.1"/>
    <property type="molecule type" value="mRNA"/>
</dbReference>
<dbReference type="CCDS" id="CCDS51977.1"/>
<dbReference type="RefSeq" id="NP_083660.1">
    <property type="nucleotide sequence ID" value="NM_029384.1"/>
</dbReference>
<dbReference type="SMR" id="A9JSM3"/>
<dbReference type="STRING" id="10090.ENSMUSP00000130452"/>
<dbReference type="iPTMnet" id="A9JSM3"/>
<dbReference type="PhosphoSitePlus" id="A9JSM3"/>
<dbReference type="PaxDb" id="10090-ENSMUSP00000130452"/>
<dbReference type="ProteomicsDB" id="259412"/>
<dbReference type="Pumba" id="A9JSM3"/>
<dbReference type="Antibodypedia" id="81708">
    <property type="antibodies" value="1 antibodies from 1 providers"/>
</dbReference>
<dbReference type="Ensembl" id="ENSMUST00000168578.3">
    <property type="protein sequence ID" value="ENSMUSP00000130452.2"/>
    <property type="gene ID" value="ENSMUSG00000030431.9"/>
</dbReference>
<dbReference type="GeneID" id="664968"/>
<dbReference type="KEGG" id="mmu:664968"/>
<dbReference type="UCSC" id="uc009eyr.1">
    <property type="organism name" value="mouse"/>
</dbReference>
<dbReference type="AGR" id="MGI:1922935"/>
<dbReference type="CTD" id="388564"/>
<dbReference type="MGI" id="MGI:1922935">
    <property type="gene designation" value="Tmem238"/>
</dbReference>
<dbReference type="VEuPathDB" id="HostDB:ENSMUSG00000030431"/>
<dbReference type="eggNOG" id="ENOG502S3VR">
    <property type="taxonomic scope" value="Eukaryota"/>
</dbReference>
<dbReference type="GeneTree" id="ENSGT00940000162720"/>
<dbReference type="HOGENOM" id="CLU_127999_0_0_1"/>
<dbReference type="InParanoid" id="A9JSM3"/>
<dbReference type="OMA" id="FYGRCAI"/>
<dbReference type="OrthoDB" id="9047238at2759"/>
<dbReference type="PhylomeDB" id="A9JSM3"/>
<dbReference type="TreeFam" id="TF339060"/>
<dbReference type="BioGRID-ORCS" id="664968">
    <property type="hits" value="1 hit in 76 CRISPR screens"/>
</dbReference>
<dbReference type="ChiTaRS" id="Tmem238">
    <property type="organism name" value="mouse"/>
</dbReference>
<dbReference type="PRO" id="PR:A9JSM3"/>
<dbReference type="Proteomes" id="UP000000589">
    <property type="component" value="Chromosome 7"/>
</dbReference>
<dbReference type="RNAct" id="A9JSM3">
    <property type="molecule type" value="protein"/>
</dbReference>
<dbReference type="Bgee" id="ENSMUSG00000030431">
    <property type="expression patterns" value="Expressed in epithelium of stomach and 127 other cell types or tissues"/>
</dbReference>
<dbReference type="ExpressionAtlas" id="A9JSM3">
    <property type="expression patterns" value="baseline and differential"/>
</dbReference>
<dbReference type="GO" id="GO:0016020">
    <property type="term" value="C:membrane"/>
    <property type="evidence" value="ECO:0007669"/>
    <property type="project" value="UniProtKB-SubCell"/>
</dbReference>
<dbReference type="InterPro" id="IPR029365">
    <property type="entry name" value="TMEM238"/>
</dbReference>
<dbReference type="PANTHER" id="PTHR28613">
    <property type="entry name" value="SI:CH211-232M10.4-RELATED"/>
    <property type="match status" value="1"/>
</dbReference>
<dbReference type="PANTHER" id="PTHR28613:SF5">
    <property type="entry name" value="TRANSMEMBRANE PROTEIN 238"/>
    <property type="match status" value="1"/>
</dbReference>
<dbReference type="Pfam" id="PF15125">
    <property type="entry name" value="TMEM238"/>
    <property type="match status" value="1"/>
</dbReference>
<feature type="chain" id="PRO_0000413541" description="Transmembrane protein 238">
    <location>
        <begin position="1"/>
        <end position="176"/>
    </location>
</feature>
<feature type="topological domain" description="Cytoplasmic" evidence="2">
    <location>
        <begin position="1"/>
        <end position="36"/>
    </location>
</feature>
<feature type="transmembrane region" description="Helical" evidence="2">
    <location>
        <begin position="37"/>
        <end position="57"/>
    </location>
</feature>
<feature type="topological domain" description="Extracellular" evidence="2">
    <location>
        <begin position="58"/>
        <end position="69"/>
    </location>
</feature>
<feature type="transmembrane region" description="Helical" evidence="2">
    <location>
        <begin position="70"/>
        <end position="90"/>
    </location>
</feature>
<feature type="topological domain" description="Cytoplasmic" evidence="2">
    <location>
        <begin position="91"/>
        <end position="176"/>
    </location>
</feature>
<feature type="region of interest" description="Disordered" evidence="3">
    <location>
        <begin position="1"/>
        <end position="21"/>
    </location>
</feature>
<feature type="region of interest" description="Disordered" evidence="3">
    <location>
        <begin position="124"/>
        <end position="156"/>
    </location>
</feature>
<feature type="compositionally biased region" description="Low complexity" evidence="3">
    <location>
        <begin position="9"/>
        <end position="19"/>
    </location>
</feature>
<feature type="compositionally biased region" description="Low complexity" evidence="3">
    <location>
        <begin position="124"/>
        <end position="135"/>
    </location>
</feature>
<feature type="modified residue" description="Phosphoserine" evidence="1">
    <location>
        <position position="175"/>
    </location>
</feature>
<evidence type="ECO:0000250" key="1">
    <source>
        <dbReference type="UniProtKB" id="C9JI98"/>
    </source>
</evidence>
<evidence type="ECO:0000255" key="2"/>
<evidence type="ECO:0000256" key="3">
    <source>
        <dbReference type="SAM" id="MobiDB-lite"/>
    </source>
</evidence>
<evidence type="ECO:0000305" key="4"/>
<comment type="subcellular location">
    <subcellularLocation>
        <location evidence="4">Membrane</location>
        <topology evidence="4">Multi-pass membrane protein</topology>
    </subcellularLocation>
</comment>
<gene>
    <name type="primary">Tmem238</name>
</gene>
<protein>
    <recommendedName>
        <fullName>Transmembrane protein 238</fullName>
    </recommendedName>
</protein>
<organism>
    <name type="scientific">Mus musculus</name>
    <name type="common">Mouse</name>
    <dbReference type="NCBI Taxonomy" id="10090"/>
    <lineage>
        <taxon>Eukaryota</taxon>
        <taxon>Metazoa</taxon>
        <taxon>Chordata</taxon>
        <taxon>Craniata</taxon>
        <taxon>Vertebrata</taxon>
        <taxon>Euteleostomi</taxon>
        <taxon>Mammalia</taxon>
        <taxon>Eutheria</taxon>
        <taxon>Euarchontoglires</taxon>
        <taxon>Glires</taxon>
        <taxon>Rodentia</taxon>
        <taxon>Myomorpha</taxon>
        <taxon>Muroidea</taxon>
        <taxon>Muridae</taxon>
        <taxon>Murinae</taxon>
        <taxon>Mus</taxon>
        <taxon>Mus</taxon>
    </lineage>
</organism>
<reference key="1">
    <citation type="journal article" date="2009" name="PLoS Biol.">
        <title>Lineage-specific biology revealed by a finished genome assembly of the mouse.</title>
        <authorList>
            <person name="Church D.M."/>
            <person name="Goodstadt L."/>
            <person name="Hillier L.W."/>
            <person name="Zody M.C."/>
            <person name="Goldstein S."/>
            <person name="She X."/>
            <person name="Bult C.J."/>
            <person name="Agarwala R."/>
            <person name="Cherry J.L."/>
            <person name="DiCuccio M."/>
            <person name="Hlavina W."/>
            <person name="Kapustin Y."/>
            <person name="Meric P."/>
            <person name="Maglott D."/>
            <person name="Birtle Z."/>
            <person name="Marques A.C."/>
            <person name="Graves T."/>
            <person name="Zhou S."/>
            <person name="Teague B."/>
            <person name="Potamousis K."/>
            <person name="Churas C."/>
            <person name="Place M."/>
            <person name="Herschleb J."/>
            <person name="Runnheim R."/>
            <person name="Forrest D."/>
            <person name="Amos-Landgraf J."/>
            <person name="Schwartz D.C."/>
            <person name="Cheng Z."/>
            <person name="Lindblad-Toh K."/>
            <person name="Eichler E.E."/>
            <person name="Ponting C.P."/>
        </authorList>
    </citation>
    <scope>NUCLEOTIDE SEQUENCE [LARGE SCALE GENOMIC DNA]</scope>
    <source>
        <strain>C57BL/6J</strain>
    </source>
</reference>
<reference key="2">
    <citation type="journal article" date="2004" name="Genome Res.">
        <title>The status, quality, and expansion of the NIH full-length cDNA project: the Mammalian Gene Collection (MGC).</title>
        <authorList>
            <consortium name="The MGC Project Team"/>
        </authorList>
    </citation>
    <scope>NUCLEOTIDE SEQUENCE [LARGE SCALE MRNA]</scope>
    <source>
        <tissue>Brain</tissue>
    </source>
</reference>
<proteinExistence type="evidence at transcript level"/>
<name>TM238_MOUSE</name>
<keyword id="KW-0472">Membrane</keyword>
<keyword id="KW-0597">Phosphoprotein</keyword>
<keyword id="KW-1185">Reference proteome</keyword>
<keyword id="KW-0812">Transmembrane</keyword>
<keyword id="KW-1133">Transmembrane helix</keyword>